<comment type="function">
    <text evidence="2">Component of the thioredoxin-thioredoxin reductase system which may be involved in biosynthesis of penicillins and cephalosporins and may be important in determining the thiol-disulfide redox balance.</text>
</comment>
<comment type="catalytic activity">
    <reaction>
        <text>[thioredoxin]-dithiol + NADP(+) = [thioredoxin]-disulfide + NADPH + H(+)</text>
        <dbReference type="Rhea" id="RHEA:20345"/>
        <dbReference type="Rhea" id="RHEA-COMP:10698"/>
        <dbReference type="Rhea" id="RHEA-COMP:10700"/>
        <dbReference type="ChEBI" id="CHEBI:15378"/>
        <dbReference type="ChEBI" id="CHEBI:29950"/>
        <dbReference type="ChEBI" id="CHEBI:50058"/>
        <dbReference type="ChEBI" id="CHEBI:57783"/>
        <dbReference type="ChEBI" id="CHEBI:58349"/>
        <dbReference type="EC" id="1.8.1.9"/>
    </reaction>
</comment>
<comment type="cofactor">
    <cofactor evidence="1">
        <name>FAD</name>
        <dbReference type="ChEBI" id="CHEBI:57692"/>
    </cofactor>
    <text evidence="1">Binds 1 FAD per subunit.</text>
</comment>
<comment type="subunit">
    <text evidence="2">Homodimer.</text>
</comment>
<comment type="miscellaneous">
    <text>The active site is a redox-active disulfide bond.</text>
</comment>
<comment type="similarity">
    <text evidence="3">Belongs to the class-II pyridine nucleotide-disulfide oxidoreductase family.</text>
</comment>
<organism>
    <name type="scientific">Penicillium chrysogenum</name>
    <name type="common">Penicillium notatum</name>
    <dbReference type="NCBI Taxonomy" id="5076"/>
    <lineage>
        <taxon>Eukaryota</taxon>
        <taxon>Fungi</taxon>
        <taxon>Dikarya</taxon>
        <taxon>Ascomycota</taxon>
        <taxon>Pezizomycotina</taxon>
        <taxon>Eurotiomycetes</taxon>
        <taxon>Eurotiomycetidae</taxon>
        <taxon>Eurotiales</taxon>
        <taxon>Aspergillaceae</taxon>
        <taxon>Penicillium</taxon>
        <taxon>Penicillium chrysogenum species complex</taxon>
    </lineage>
</organism>
<reference key="1">
    <citation type="journal article" date="1994" name="J. Bacteriol.">
        <title>The thioredoxin system of Penicillium chrysogenum and its possible role in penicillin biosynthesis.</title>
        <authorList>
            <person name="Cohen G."/>
            <person name="Argaman A."/>
            <person name="Schreiber R."/>
            <person name="Mislovati M."/>
            <person name="Aharonowitz Y."/>
        </authorList>
    </citation>
    <scope>NUCLEOTIDE SEQUENCE [GENOMIC DNA]</scope>
    <scope>PROTEIN SEQUENCE OF 2-29</scope>
    <scope>FUNCTION</scope>
    <scope>SUBUNIT</scope>
    <source>
        <strain>ATCC 9480 / CBS 307.48 / NRRL 1951 / GB8 / QM 941</strain>
    </source>
</reference>
<gene>
    <name type="primary">TRR1</name>
    <name type="synonym">TRXB</name>
</gene>
<protein>
    <recommendedName>
        <fullName>Thioredoxin reductase</fullName>
        <ecNumber>1.8.1.9</ecNumber>
    </recommendedName>
</protein>
<dbReference type="EC" id="1.8.1.9"/>
<dbReference type="EMBL" id="X76119">
    <property type="protein sequence ID" value="CAA53725.1"/>
    <property type="molecule type" value="Genomic_DNA"/>
</dbReference>
<dbReference type="PIR" id="B49888">
    <property type="entry name" value="B49888"/>
</dbReference>
<dbReference type="SMR" id="P43496"/>
<dbReference type="GO" id="GO:0005737">
    <property type="term" value="C:cytoplasm"/>
    <property type="evidence" value="ECO:0007669"/>
    <property type="project" value="InterPro"/>
</dbReference>
<dbReference type="GO" id="GO:0004791">
    <property type="term" value="F:thioredoxin-disulfide reductase (NADPH) activity"/>
    <property type="evidence" value="ECO:0007669"/>
    <property type="project" value="UniProtKB-EC"/>
</dbReference>
<dbReference type="GO" id="GO:0019430">
    <property type="term" value="P:removal of superoxide radicals"/>
    <property type="evidence" value="ECO:0007669"/>
    <property type="project" value="InterPro"/>
</dbReference>
<dbReference type="Gene3D" id="3.50.50.60">
    <property type="entry name" value="FAD/NAD(P)-binding domain"/>
    <property type="match status" value="2"/>
</dbReference>
<dbReference type="InterPro" id="IPR036188">
    <property type="entry name" value="FAD/NAD-bd_sf"/>
</dbReference>
<dbReference type="InterPro" id="IPR023753">
    <property type="entry name" value="FAD/NAD-binding_dom"/>
</dbReference>
<dbReference type="InterPro" id="IPR050097">
    <property type="entry name" value="Ferredoxin-NADP_redctase_2"/>
</dbReference>
<dbReference type="InterPro" id="IPR008255">
    <property type="entry name" value="Pyr_nucl-diS_OxRdtase_2_AS"/>
</dbReference>
<dbReference type="InterPro" id="IPR005982">
    <property type="entry name" value="Thioredox_Rdtase"/>
</dbReference>
<dbReference type="NCBIfam" id="TIGR01292">
    <property type="entry name" value="TRX_reduct"/>
    <property type="match status" value="1"/>
</dbReference>
<dbReference type="PANTHER" id="PTHR48105">
    <property type="entry name" value="THIOREDOXIN REDUCTASE 1-RELATED-RELATED"/>
    <property type="match status" value="1"/>
</dbReference>
<dbReference type="Pfam" id="PF07992">
    <property type="entry name" value="Pyr_redox_2"/>
    <property type="match status" value="1"/>
</dbReference>
<dbReference type="PRINTS" id="PR00368">
    <property type="entry name" value="FADPNR"/>
</dbReference>
<dbReference type="PRINTS" id="PR00469">
    <property type="entry name" value="PNDRDTASEII"/>
</dbReference>
<dbReference type="SUPFAM" id="SSF51905">
    <property type="entry name" value="FAD/NAD(P)-binding domain"/>
    <property type="match status" value="1"/>
</dbReference>
<dbReference type="PROSITE" id="PS00573">
    <property type="entry name" value="PYRIDINE_REDOX_2"/>
    <property type="match status" value="1"/>
</dbReference>
<evidence type="ECO:0000250" key="1">
    <source>
        <dbReference type="UniProtKB" id="P29509"/>
    </source>
</evidence>
<evidence type="ECO:0000269" key="2">
    <source>
    </source>
</evidence>
<evidence type="ECO:0000305" key="3"/>
<proteinExistence type="evidence at protein level"/>
<keyword id="KW-0903">Direct protein sequencing</keyword>
<keyword id="KW-1015">Disulfide bond</keyword>
<keyword id="KW-0274">FAD</keyword>
<keyword id="KW-0285">Flavoprotein</keyword>
<keyword id="KW-0521">NADP</keyword>
<keyword id="KW-0560">Oxidoreductase</keyword>
<keyword id="KW-0676">Redox-active center</keyword>
<sequence length="334" mass="35701">MVHSKVVIIGSGAGAHTAAIYLSRAELQPVLYEGMLANGTAAGGQLTTTTDVENFPGFPSGIGGAELMDNMRAQSERFGTEIITETISKLDLSSRPFKMWTEWNDDEGSEPVRTADAVIIATGANARRLNLPGEETYWQNGISACAVCDGAVPIFRNKPLYVIGGGDSAAEEAMFLAKYGSSVTVLVRKDKLRASNIMADRLLAHPKCKVRFNTVATEVIGENKPNGLMTHLRVKDVLSNAEEVVEANGLFYAVGHDPASGLVKGQVELDDEGYIITKPGTSFTNVEGVFACGDVQDKRYRQAITSAGSGCVAALEAEKFIAETETHQEAKPVL</sequence>
<feature type="initiator methionine" description="Removed" evidence="2">
    <location>
        <position position="1"/>
    </location>
</feature>
<feature type="chain" id="PRO_0000166765" description="Thioredoxin reductase">
    <location>
        <begin position="2"/>
        <end position="334"/>
    </location>
</feature>
<feature type="binding site" evidence="1">
    <location>
        <begin position="11"/>
        <end position="14"/>
    </location>
    <ligand>
        <name>FAD</name>
        <dbReference type="ChEBI" id="CHEBI:57692"/>
    </ligand>
</feature>
<feature type="binding site" evidence="1">
    <location>
        <begin position="40"/>
        <end position="41"/>
    </location>
    <ligand>
        <name>FAD</name>
        <dbReference type="ChEBI" id="CHEBI:57692"/>
    </ligand>
</feature>
<feature type="binding site" evidence="1">
    <location>
        <position position="45"/>
    </location>
    <ligand>
        <name>FAD</name>
        <dbReference type="ChEBI" id="CHEBI:57692"/>
    </ligand>
</feature>
<feature type="binding site" evidence="1">
    <location>
        <position position="54"/>
    </location>
    <ligand>
        <name>FAD</name>
        <dbReference type="ChEBI" id="CHEBI:57692"/>
    </ligand>
</feature>
<feature type="binding site" evidence="1">
    <location>
        <position position="148"/>
    </location>
    <ligand>
        <name>FAD</name>
        <dbReference type="ChEBI" id="CHEBI:57692"/>
    </ligand>
</feature>
<feature type="binding site" evidence="1">
    <location>
        <position position="294"/>
    </location>
    <ligand>
        <name>FAD</name>
        <dbReference type="ChEBI" id="CHEBI:57692"/>
    </ligand>
</feature>
<feature type="binding site" evidence="1">
    <location>
        <begin position="301"/>
        <end position="303"/>
    </location>
    <ligand>
        <name>FAD</name>
        <dbReference type="ChEBI" id="CHEBI:57692"/>
    </ligand>
</feature>
<feature type="disulfide bond" description="Redox-active" evidence="1">
    <location>
        <begin position="145"/>
        <end position="148"/>
    </location>
</feature>
<name>TRXB_PENCH</name>
<accession>P43496</accession>